<reference key="1">
    <citation type="submission" date="2007-08" db="EMBL/GenBank/DDBJ databases">
        <authorList>
            <consortium name="The Vibrio harveyi Genome Sequencing Project"/>
            <person name="Bassler B."/>
            <person name="Clifton S.W."/>
            <person name="Fulton L."/>
            <person name="Delehaunty K."/>
            <person name="Fronick C."/>
            <person name="Harrison M."/>
            <person name="Markivic C."/>
            <person name="Fulton R."/>
            <person name="Tin-Wollam A.-M."/>
            <person name="Shah N."/>
            <person name="Pepin K."/>
            <person name="Nash W."/>
            <person name="Thiruvilangam P."/>
            <person name="Bhonagiri V."/>
            <person name="Waters C."/>
            <person name="Tu K.C."/>
            <person name="Irgon J."/>
            <person name="Wilson R.K."/>
        </authorList>
    </citation>
    <scope>NUCLEOTIDE SEQUENCE [LARGE SCALE GENOMIC DNA]</scope>
    <source>
        <strain>ATCC BAA-1116 / BB120</strain>
    </source>
</reference>
<comment type="function">
    <text evidence="1">Bidirectionally degrades single-stranded DNA into large acid-insoluble oligonucleotides, which are then degraded further into small acid-soluble oligonucleotides.</text>
</comment>
<comment type="catalytic activity">
    <reaction evidence="1">
        <text>Exonucleolytic cleavage in either 5'- to 3'- or 3'- to 5'-direction to yield nucleoside 5'-phosphates.</text>
        <dbReference type="EC" id="3.1.11.6"/>
    </reaction>
</comment>
<comment type="subunit">
    <text evidence="1">Heterooligomer composed of large and small subunits.</text>
</comment>
<comment type="subcellular location">
    <subcellularLocation>
        <location evidence="1">Cytoplasm</location>
    </subcellularLocation>
</comment>
<comment type="similarity">
    <text evidence="1">Belongs to the XseB family.</text>
</comment>
<sequence length="80" mass="8852">MAVKKPENMTFEATIEELDSLVDQLENGDLALDDALRKFERGIALARAGQTKLSDAEQRVSILLSEDDEAPLSDFNPESE</sequence>
<protein>
    <recommendedName>
        <fullName evidence="1">Exodeoxyribonuclease 7 small subunit</fullName>
        <ecNumber evidence="1">3.1.11.6</ecNumber>
    </recommendedName>
    <alternativeName>
        <fullName evidence="1">Exodeoxyribonuclease VII small subunit</fullName>
        <shortName evidence="1">Exonuclease VII small subunit</shortName>
    </alternativeName>
</protein>
<gene>
    <name evidence="1" type="primary">xseB</name>
    <name type="ordered locus">VIBHAR_01175</name>
</gene>
<dbReference type="EC" id="3.1.11.6" evidence="1"/>
<dbReference type="EMBL" id="CP000789">
    <property type="protein sequence ID" value="ABU70165.1"/>
    <property type="molecule type" value="Genomic_DNA"/>
</dbReference>
<dbReference type="RefSeq" id="WP_005427560.1">
    <property type="nucleotide sequence ID" value="NC_022269.1"/>
</dbReference>
<dbReference type="SMR" id="A7MYC1"/>
<dbReference type="GeneID" id="83582720"/>
<dbReference type="KEGG" id="vha:VIBHAR_01175"/>
<dbReference type="PATRIC" id="fig|338187.25.peg.1454"/>
<dbReference type="Proteomes" id="UP000008152">
    <property type="component" value="Chromosome I"/>
</dbReference>
<dbReference type="GO" id="GO:0005829">
    <property type="term" value="C:cytosol"/>
    <property type="evidence" value="ECO:0007669"/>
    <property type="project" value="TreeGrafter"/>
</dbReference>
<dbReference type="GO" id="GO:0009318">
    <property type="term" value="C:exodeoxyribonuclease VII complex"/>
    <property type="evidence" value="ECO:0007669"/>
    <property type="project" value="InterPro"/>
</dbReference>
<dbReference type="GO" id="GO:0008855">
    <property type="term" value="F:exodeoxyribonuclease VII activity"/>
    <property type="evidence" value="ECO:0007669"/>
    <property type="project" value="UniProtKB-UniRule"/>
</dbReference>
<dbReference type="GO" id="GO:0006308">
    <property type="term" value="P:DNA catabolic process"/>
    <property type="evidence" value="ECO:0007669"/>
    <property type="project" value="UniProtKB-UniRule"/>
</dbReference>
<dbReference type="Gene3D" id="1.10.287.1040">
    <property type="entry name" value="Exonuclease VII, small subunit"/>
    <property type="match status" value="1"/>
</dbReference>
<dbReference type="HAMAP" id="MF_00337">
    <property type="entry name" value="Exonuc_7_S"/>
    <property type="match status" value="1"/>
</dbReference>
<dbReference type="InterPro" id="IPR003761">
    <property type="entry name" value="Exonuc_VII_S"/>
</dbReference>
<dbReference type="InterPro" id="IPR037004">
    <property type="entry name" value="Exonuc_VII_ssu_sf"/>
</dbReference>
<dbReference type="NCBIfam" id="NF002137">
    <property type="entry name" value="PRK00977.1-1"/>
    <property type="match status" value="1"/>
</dbReference>
<dbReference type="NCBIfam" id="NF002140">
    <property type="entry name" value="PRK00977.1-4"/>
    <property type="match status" value="1"/>
</dbReference>
<dbReference type="NCBIfam" id="TIGR01280">
    <property type="entry name" value="xseB"/>
    <property type="match status" value="1"/>
</dbReference>
<dbReference type="PANTHER" id="PTHR34137">
    <property type="entry name" value="EXODEOXYRIBONUCLEASE 7 SMALL SUBUNIT"/>
    <property type="match status" value="1"/>
</dbReference>
<dbReference type="PANTHER" id="PTHR34137:SF1">
    <property type="entry name" value="EXODEOXYRIBONUCLEASE 7 SMALL SUBUNIT"/>
    <property type="match status" value="1"/>
</dbReference>
<dbReference type="Pfam" id="PF02609">
    <property type="entry name" value="Exonuc_VII_S"/>
    <property type="match status" value="1"/>
</dbReference>
<dbReference type="PIRSF" id="PIRSF006488">
    <property type="entry name" value="Exonuc_VII_S"/>
    <property type="match status" value="1"/>
</dbReference>
<dbReference type="SUPFAM" id="SSF116842">
    <property type="entry name" value="XseB-like"/>
    <property type="match status" value="1"/>
</dbReference>
<accession>A7MYC1</accession>
<proteinExistence type="inferred from homology"/>
<name>EX7S_VIBC1</name>
<evidence type="ECO:0000255" key="1">
    <source>
        <dbReference type="HAMAP-Rule" id="MF_00337"/>
    </source>
</evidence>
<organism>
    <name type="scientific">Vibrio campbellii (strain ATCC BAA-1116)</name>
    <dbReference type="NCBI Taxonomy" id="2902295"/>
    <lineage>
        <taxon>Bacteria</taxon>
        <taxon>Pseudomonadati</taxon>
        <taxon>Pseudomonadota</taxon>
        <taxon>Gammaproteobacteria</taxon>
        <taxon>Vibrionales</taxon>
        <taxon>Vibrionaceae</taxon>
        <taxon>Vibrio</taxon>
    </lineage>
</organism>
<feature type="chain" id="PRO_1000019598" description="Exodeoxyribonuclease 7 small subunit">
    <location>
        <begin position="1"/>
        <end position="80"/>
    </location>
</feature>
<keyword id="KW-0963">Cytoplasm</keyword>
<keyword id="KW-0269">Exonuclease</keyword>
<keyword id="KW-0378">Hydrolase</keyword>
<keyword id="KW-0540">Nuclease</keyword>